<accession>Q9V0D5</accession>
<accession>G8ZH65</accession>
<organism>
    <name type="scientific">Pyrococcus abyssi (strain GE5 / Orsay)</name>
    <dbReference type="NCBI Taxonomy" id="272844"/>
    <lineage>
        <taxon>Archaea</taxon>
        <taxon>Methanobacteriati</taxon>
        <taxon>Methanobacteriota</taxon>
        <taxon>Thermococci</taxon>
        <taxon>Thermococcales</taxon>
        <taxon>Thermococcaceae</taxon>
        <taxon>Pyrococcus</taxon>
    </lineage>
</organism>
<name>MDH_PYRAB</name>
<gene>
    <name type="primary">mdh</name>
    <name type="ordered locus">PYRAB08550</name>
    <name type="ORF">PAB1791</name>
</gene>
<feature type="chain" id="PRO_0000083828" description="Malate dehydrogenase">
    <location>
        <begin position="1"/>
        <end position="362"/>
    </location>
</feature>
<proteinExistence type="inferred from homology"/>
<keyword id="KW-0963">Cytoplasm</keyword>
<keyword id="KW-0520">NAD</keyword>
<keyword id="KW-0560">Oxidoreductase</keyword>
<keyword id="KW-0816">Tricarboxylic acid cycle</keyword>
<evidence type="ECO:0000250" key="1"/>
<evidence type="ECO:0000305" key="2"/>
<comment type="catalytic activity">
    <reaction>
        <text>(S)-malate + NAD(+) = oxaloacetate + NADH + H(+)</text>
        <dbReference type="Rhea" id="RHEA:21432"/>
        <dbReference type="ChEBI" id="CHEBI:15378"/>
        <dbReference type="ChEBI" id="CHEBI:15589"/>
        <dbReference type="ChEBI" id="CHEBI:16452"/>
        <dbReference type="ChEBI" id="CHEBI:57540"/>
        <dbReference type="ChEBI" id="CHEBI:57945"/>
        <dbReference type="EC" id="1.1.1.37"/>
    </reaction>
</comment>
<comment type="subunit">
    <text evidence="1">Homodimer.</text>
</comment>
<comment type="subcellular location">
    <subcellularLocation>
        <location evidence="2">Cytoplasm</location>
    </subcellularLocation>
</comment>
<comment type="similarity">
    <text evidence="2">Belongs to the LDH2/MDH2 oxidoreductase family.</text>
</comment>
<protein>
    <recommendedName>
        <fullName>Malate dehydrogenase</fullName>
        <ecNumber>1.1.1.37</ecNumber>
    </recommendedName>
</protein>
<sequence length="362" mass="39907">MFEKGYVDENYVRIPKDELFSFVVRVLTKLGTPEEDAKIVADNLIMADLRGIESHGVQRLKRYVDGILSGGINLHPRIKIIREGPSYALLDGDEGFGQVVGYKAMKLAIEKARKTGIGIVAVRNSNHYGIAGYYALMAAEEGMIGISMTNSRPLVAPTGGVERILGTNPIALAAPTKGKPFLLDMATSVVPIGKLEVYRRKGEEIPEGWAINSKGEITRSVEEVFNGGSLLPLGGFGELLGGHKGYGLSLMVDILSGILSGGTWSKHVKNTNEKNSNVCHFFMAINIEHFTPLEEFKGRMSEMINEIKNSRKHPDFERIWIHGEKGFLTMETRLKLGIPIYKKVLDELNEIARRVGVKGLEV</sequence>
<dbReference type="EC" id="1.1.1.37"/>
<dbReference type="EMBL" id="AJ248285">
    <property type="protein sequence ID" value="CAB49769.1"/>
    <property type="molecule type" value="Genomic_DNA"/>
</dbReference>
<dbReference type="EMBL" id="HE613800">
    <property type="protein sequence ID" value="CCE70260.1"/>
    <property type="molecule type" value="Genomic_DNA"/>
</dbReference>
<dbReference type="PIR" id="H75131">
    <property type="entry name" value="H75131"/>
</dbReference>
<dbReference type="RefSeq" id="WP_010867978.1">
    <property type="nucleotide sequence ID" value="NC_000868.1"/>
</dbReference>
<dbReference type="SMR" id="Q9V0D5"/>
<dbReference type="STRING" id="272844.PAB1791"/>
<dbReference type="KEGG" id="pab:PAB1791"/>
<dbReference type="PATRIC" id="fig|272844.11.peg.903"/>
<dbReference type="eggNOG" id="arCOG04874">
    <property type="taxonomic scope" value="Archaea"/>
</dbReference>
<dbReference type="HOGENOM" id="CLU_040452_2_0_2"/>
<dbReference type="OrthoDB" id="40552at2157"/>
<dbReference type="PhylomeDB" id="Q9V0D5"/>
<dbReference type="Proteomes" id="UP000000810">
    <property type="component" value="Chromosome"/>
</dbReference>
<dbReference type="Proteomes" id="UP000009139">
    <property type="component" value="Chromosome"/>
</dbReference>
<dbReference type="GO" id="GO:0005737">
    <property type="term" value="C:cytoplasm"/>
    <property type="evidence" value="ECO:0007669"/>
    <property type="project" value="UniProtKB-SubCell"/>
</dbReference>
<dbReference type="GO" id="GO:0030060">
    <property type="term" value="F:L-malate dehydrogenase (NAD+) activity"/>
    <property type="evidence" value="ECO:0007669"/>
    <property type="project" value="UniProtKB-EC"/>
</dbReference>
<dbReference type="GO" id="GO:0006099">
    <property type="term" value="P:tricarboxylic acid cycle"/>
    <property type="evidence" value="ECO:0007669"/>
    <property type="project" value="UniProtKB-KW"/>
</dbReference>
<dbReference type="Gene3D" id="1.10.1530.10">
    <property type="match status" value="1"/>
</dbReference>
<dbReference type="Gene3D" id="3.30.1370.60">
    <property type="entry name" value="Hypothetical oxidoreductase yiak, domain 2"/>
    <property type="match status" value="1"/>
</dbReference>
<dbReference type="InterPro" id="IPR043144">
    <property type="entry name" value="Mal/L-sulf/L-lact_DH-like_ah"/>
</dbReference>
<dbReference type="InterPro" id="IPR043143">
    <property type="entry name" value="Mal/L-sulf/L-lact_DH-like_NADP"/>
</dbReference>
<dbReference type="InterPro" id="IPR036111">
    <property type="entry name" value="Mal/L-sulfo/L-lacto_DH-like_sf"/>
</dbReference>
<dbReference type="InterPro" id="IPR003767">
    <property type="entry name" value="Malate/L-lactate_DH-like"/>
</dbReference>
<dbReference type="PANTHER" id="PTHR11091:SF0">
    <property type="entry name" value="MALATE DEHYDROGENASE"/>
    <property type="match status" value="1"/>
</dbReference>
<dbReference type="PANTHER" id="PTHR11091">
    <property type="entry name" value="OXIDOREDUCTASE-RELATED"/>
    <property type="match status" value="1"/>
</dbReference>
<dbReference type="Pfam" id="PF02615">
    <property type="entry name" value="Ldh_2"/>
    <property type="match status" value="1"/>
</dbReference>
<dbReference type="SUPFAM" id="SSF89733">
    <property type="entry name" value="L-sulfolactate dehydrogenase-like"/>
    <property type="match status" value="1"/>
</dbReference>
<reference key="1">
    <citation type="journal article" date="2003" name="Mol. Microbiol.">
        <title>An integrated analysis of the genome of the hyperthermophilic archaeon Pyrococcus abyssi.</title>
        <authorList>
            <person name="Cohen G.N."/>
            <person name="Barbe V."/>
            <person name="Flament D."/>
            <person name="Galperin M."/>
            <person name="Heilig R."/>
            <person name="Lecompte O."/>
            <person name="Poch O."/>
            <person name="Prieur D."/>
            <person name="Querellou J."/>
            <person name="Ripp R."/>
            <person name="Thierry J.-C."/>
            <person name="Van der Oost J."/>
            <person name="Weissenbach J."/>
            <person name="Zivanovic Y."/>
            <person name="Forterre P."/>
        </authorList>
    </citation>
    <scope>NUCLEOTIDE SEQUENCE [LARGE SCALE GENOMIC DNA]</scope>
    <source>
        <strain>GE5 / Orsay</strain>
    </source>
</reference>
<reference key="2">
    <citation type="journal article" date="2012" name="Curr. Microbiol.">
        <title>Re-annotation of two hyperthermophilic archaea Pyrococcus abyssi GE5 and Pyrococcus furiosus DSM 3638.</title>
        <authorList>
            <person name="Gao J."/>
            <person name="Wang J."/>
        </authorList>
    </citation>
    <scope>GENOME REANNOTATION</scope>
    <source>
        <strain>GE5 / Orsay</strain>
    </source>
</reference>